<sequence length="101" mass="11351">MATNHLVLSGTITRSRSFKSPAGIAHSVIMLEHKSQCFEAEMLRNVYCQMQVIFSGERFESVTEQLKSGVDIEVQGFIALQQSRNGQNRLVLHAENVELKT</sequence>
<gene>
    <name evidence="1" type="primary">priB</name>
    <name type="ordered locus">Ssed_0758</name>
</gene>
<keyword id="KW-0235">DNA replication</keyword>
<keyword id="KW-0238">DNA-binding</keyword>
<keyword id="KW-0639">Primosome</keyword>
<keyword id="KW-1185">Reference proteome</keyword>
<name>PRIB_SHESH</name>
<organism>
    <name type="scientific">Shewanella sediminis (strain HAW-EB3)</name>
    <dbReference type="NCBI Taxonomy" id="425104"/>
    <lineage>
        <taxon>Bacteria</taxon>
        <taxon>Pseudomonadati</taxon>
        <taxon>Pseudomonadota</taxon>
        <taxon>Gammaproteobacteria</taxon>
        <taxon>Alteromonadales</taxon>
        <taxon>Shewanellaceae</taxon>
        <taxon>Shewanella</taxon>
    </lineage>
</organism>
<proteinExistence type="inferred from homology"/>
<comment type="function">
    <text evidence="1">Involved in the restart of stalled replication forks, which reloads the replicative helicase on sites other than the origin of replication; the PriA-PriB pathway is the major replication restart pathway. During primosome assembly it facilitates complex formation between PriA and DnaT on DNA; stabilizes PriA on DNA. Stimulates the DNA unwinding activity of PriA helicase.</text>
</comment>
<comment type="subunit">
    <text evidence="1">Homodimer. Interacts with PriA and DnaT. Component of the replication restart primosome. Primosome assembly occurs via a 'hand-off' mechanism. PriA binds to replication forks, subsequently PriB then DnaT bind; DnaT then displaces ssDNA to generate the helicase loading substrate.</text>
</comment>
<comment type="similarity">
    <text evidence="1">Belongs to the PriB family.</text>
</comment>
<protein>
    <recommendedName>
        <fullName evidence="1">Replication restart protein PriB</fullName>
    </recommendedName>
</protein>
<dbReference type="EMBL" id="CP000821">
    <property type="protein sequence ID" value="ABV35369.1"/>
    <property type="molecule type" value="Genomic_DNA"/>
</dbReference>
<dbReference type="RefSeq" id="WP_012141106.1">
    <property type="nucleotide sequence ID" value="NC_009831.1"/>
</dbReference>
<dbReference type="SMR" id="A8FR96"/>
<dbReference type="STRING" id="425104.Ssed_0758"/>
<dbReference type="KEGG" id="sse:Ssed_0758"/>
<dbReference type="eggNOG" id="COG2965">
    <property type="taxonomic scope" value="Bacteria"/>
</dbReference>
<dbReference type="HOGENOM" id="CLU_166075_0_0_6"/>
<dbReference type="OrthoDB" id="9180733at2"/>
<dbReference type="Proteomes" id="UP000002015">
    <property type="component" value="Chromosome"/>
</dbReference>
<dbReference type="GO" id="GO:1990077">
    <property type="term" value="C:primosome complex"/>
    <property type="evidence" value="ECO:0007669"/>
    <property type="project" value="UniProtKB-KW"/>
</dbReference>
<dbReference type="GO" id="GO:0003697">
    <property type="term" value="F:single-stranded DNA binding"/>
    <property type="evidence" value="ECO:0007669"/>
    <property type="project" value="UniProtKB-UniRule"/>
</dbReference>
<dbReference type="GO" id="GO:0006269">
    <property type="term" value="P:DNA replication, synthesis of primer"/>
    <property type="evidence" value="ECO:0007669"/>
    <property type="project" value="UniProtKB-KW"/>
</dbReference>
<dbReference type="Gene3D" id="2.40.50.140">
    <property type="entry name" value="Nucleic acid-binding proteins"/>
    <property type="match status" value="1"/>
</dbReference>
<dbReference type="HAMAP" id="MF_00720">
    <property type="entry name" value="PriB"/>
    <property type="match status" value="1"/>
</dbReference>
<dbReference type="InterPro" id="IPR012340">
    <property type="entry name" value="NA-bd_OB-fold"/>
</dbReference>
<dbReference type="InterPro" id="IPR000424">
    <property type="entry name" value="Primosome_PriB/ssb"/>
</dbReference>
<dbReference type="InterPro" id="IPR023646">
    <property type="entry name" value="Prisomal_replication_PriB"/>
</dbReference>
<dbReference type="NCBIfam" id="TIGR04418">
    <property type="entry name" value="PriB_gamma"/>
    <property type="match status" value="1"/>
</dbReference>
<dbReference type="Pfam" id="PF22657">
    <property type="entry name" value="SSB_1"/>
    <property type="match status" value="1"/>
</dbReference>
<dbReference type="PIRSF" id="PIRSF003135">
    <property type="entry name" value="Primosomal_n"/>
    <property type="match status" value="1"/>
</dbReference>
<dbReference type="SUPFAM" id="SSF50249">
    <property type="entry name" value="Nucleic acid-binding proteins"/>
    <property type="match status" value="1"/>
</dbReference>
<dbReference type="PROSITE" id="PS50935">
    <property type="entry name" value="SSB"/>
    <property type="match status" value="1"/>
</dbReference>
<feature type="chain" id="PRO_1000083297" description="Replication restart protein PriB">
    <location>
        <begin position="1"/>
        <end position="101"/>
    </location>
</feature>
<feature type="domain" description="SSB" evidence="1">
    <location>
        <begin position="1"/>
        <end position="101"/>
    </location>
</feature>
<accession>A8FR96</accession>
<evidence type="ECO:0000255" key="1">
    <source>
        <dbReference type="HAMAP-Rule" id="MF_00720"/>
    </source>
</evidence>
<reference key="1">
    <citation type="submission" date="2007-08" db="EMBL/GenBank/DDBJ databases">
        <title>Complete sequence of Shewanella sediminis HAW-EB3.</title>
        <authorList>
            <consortium name="US DOE Joint Genome Institute"/>
            <person name="Copeland A."/>
            <person name="Lucas S."/>
            <person name="Lapidus A."/>
            <person name="Barry K."/>
            <person name="Glavina del Rio T."/>
            <person name="Dalin E."/>
            <person name="Tice H."/>
            <person name="Pitluck S."/>
            <person name="Chertkov O."/>
            <person name="Brettin T."/>
            <person name="Bruce D."/>
            <person name="Detter J.C."/>
            <person name="Han C."/>
            <person name="Schmutz J."/>
            <person name="Larimer F."/>
            <person name="Land M."/>
            <person name="Hauser L."/>
            <person name="Kyrpides N."/>
            <person name="Kim E."/>
            <person name="Zhao J.-S."/>
            <person name="Richardson P."/>
        </authorList>
    </citation>
    <scope>NUCLEOTIDE SEQUENCE [LARGE SCALE GENOMIC DNA]</scope>
    <source>
        <strain>HAW-EB3</strain>
    </source>
</reference>